<accession>Q0DHE3</accession>
<reference key="1">
    <citation type="journal article" date="2005" name="Nature">
        <title>The map-based sequence of the rice genome.</title>
        <authorList>
            <consortium name="International rice genome sequencing project (IRGSP)"/>
        </authorList>
    </citation>
    <scope>NUCLEOTIDE SEQUENCE [LARGE SCALE GENOMIC DNA]</scope>
    <source>
        <strain>cv. Nipponbare</strain>
    </source>
</reference>
<reference key="2">
    <citation type="journal article" date="2008" name="Nucleic Acids Res.">
        <title>The rice annotation project database (RAP-DB): 2008 update.</title>
        <authorList>
            <consortium name="The rice annotation project (RAP)"/>
        </authorList>
    </citation>
    <scope>GENOME REANNOTATION</scope>
    <source>
        <strain>cv. Nipponbare</strain>
    </source>
</reference>
<reference key="3">
    <citation type="journal article" date="2013" name="Rice">
        <title>Improvement of the Oryza sativa Nipponbare reference genome using next generation sequence and optical map data.</title>
        <authorList>
            <person name="Kawahara Y."/>
            <person name="de la Bastide M."/>
            <person name="Hamilton J.P."/>
            <person name="Kanamori H."/>
            <person name="McCombie W.R."/>
            <person name="Ouyang S."/>
            <person name="Schwartz D.C."/>
            <person name="Tanaka T."/>
            <person name="Wu J."/>
            <person name="Zhou S."/>
            <person name="Childs K.L."/>
            <person name="Davidson R.M."/>
            <person name="Lin H."/>
            <person name="Quesada-Ocampo L."/>
            <person name="Vaillancourt B."/>
            <person name="Sakai H."/>
            <person name="Lee S.S."/>
            <person name="Kim J."/>
            <person name="Numa H."/>
            <person name="Itoh T."/>
            <person name="Buell C.R."/>
            <person name="Matsumoto T."/>
        </authorList>
    </citation>
    <scope>GENOME REANNOTATION</scope>
    <source>
        <strain>cv. Nipponbare</strain>
    </source>
</reference>
<keyword id="KW-1003">Cell membrane</keyword>
<keyword id="KW-0406">Ion transport</keyword>
<keyword id="KW-0472">Membrane</keyword>
<keyword id="KW-1185">Reference proteome</keyword>
<keyword id="KW-0732">Signal</keyword>
<keyword id="KW-0812">Transmembrane</keyword>
<keyword id="KW-1133">Transmembrane helix</keyword>
<keyword id="KW-0813">Transport</keyword>
<keyword id="KW-0862">Zinc</keyword>
<keyword id="KW-0864">Zinc transport</keyword>
<sequence>MAFDLKLTACLLLAVFSLAAAADCECQPSDEGHDAAKSRTLKVIAIFCILVGSSAGCAIPSLGRRFPALRPDTSLFFALKAFAAGVILATAFVHILPVSFDKLGSPCLVDGPWRKYPFTGLVAMLAAVATLLLDTIATGYFLQRAQDSRGAVAAVAACGGDASSSHDHERGNAHGVSSAVIASATMPNDAADDCDDAEDRAKLVRHRVISQVFELGIIVHSIIIGISLGASESPSTIRPLVAALTFHQFFEGIGLGGCIVQARFHLKSAVTMAIFFSLTTPVGIMIGIGISSAYNENSPTALIVEGILDAAAAGILNYMALVDLLAEDFMNPRVRKSGRLQLIISILLLVGIALMSLLGIWA</sequence>
<dbReference type="EMBL" id="AP008211">
    <property type="protein sequence ID" value="BAF17730.2"/>
    <property type="status" value="ALT_SEQ"/>
    <property type="molecule type" value="Genomic_DNA"/>
</dbReference>
<dbReference type="EMBL" id="AP014961">
    <property type="status" value="NOT_ANNOTATED_CDS"/>
    <property type="molecule type" value="Genomic_DNA"/>
</dbReference>
<dbReference type="RefSeq" id="XP_015637508.1">
    <property type="nucleotide sequence ID" value="XM_015782022.1"/>
</dbReference>
<dbReference type="SMR" id="Q0DHE3"/>
<dbReference type="FunCoup" id="Q0DHE3">
    <property type="interactions" value="1802"/>
</dbReference>
<dbReference type="STRING" id="39947.Q0DHE3"/>
<dbReference type="PaxDb" id="39947-Q0DHE3"/>
<dbReference type="EnsemblPlants" id="Os05t0472400-01">
    <property type="protein sequence ID" value="Os05t0472400-01"/>
    <property type="gene ID" value="Os05g0472400"/>
</dbReference>
<dbReference type="Gramene" id="Os05t0472400-01">
    <property type="protein sequence ID" value="Os05t0472400-01"/>
    <property type="gene ID" value="Os05g0472400"/>
</dbReference>
<dbReference type="KEGG" id="dosa:Os05g0472400"/>
<dbReference type="eggNOG" id="KOG1558">
    <property type="taxonomic scope" value="Eukaryota"/>
</dbReference>
<dbReference type="InParanoid" id="Q0DHE3"/>
<dbReference type="OrthoDB" id="448280at2759"/>
<dbReference type="Proteomes" id="UP000000763">
    <property type="component" value="Chromosome 5"/>
</dbReference>
<dbReference type="Proteomes" id="UP000059680">
    <property type="component" value="Chromosome 5"/>
</dbReference>
<dbReference type="GO" id="GO:0005886">
    <property type="term" value="C:plasma membrane"/>
    <property type="evidence" value="ECO:0000318"/>
    <property type="project" value="GO_Central"/>
</dbReference>
<dbReference type="GO" id="GO:0005385">
    <property type="term" value="F:zinc ion transmembrane transporter activity"/>
    <property type="evidence" value="ECO:0000318"/>
    <property type="project" value="GO_Central"/>
</dbReference>
<dbReference type="GO" id="GO:0071577">
    <property type="term" value="P:zinc ion transmembrane transport"/>
    <property type="evidence" value="ECO:0000318"/>
    <property type="project" value="GO_Central"/>
</dbReference>
<dbReference type="InterPro" id="IPR003689">
    <property type="entry name" value="ZIP"/>
</dbReference>
<dbReference type="InterPro" id="IPR004698">
    <property type="entry name" value="Zn/Fe_permease_fun/pln"/>
</dbReference>
<dbReference type="NCBIfam" id="TIGR00820">
    <property type="entry name" value="zip"/>
    <property type="match status" value="1"/>
</dbReference>
<dbReference type="PANTHER" id="PTHR11040:SF177">
    <property type="entry name" value="ZINC TRANSPORTER 9"/>
    <property type="match status" value="1"/>
</dbReference>
<dbReference type="PANTHER" id="PTHR11040">
    <property type="entry name" value="ZINC/IRON TRANSPORTER"/>
    <property type="match status" value="1"/>
</dbReference>
<dbReference type="Pfam" id="PF02535">
    <property type="entry name" value="Zip"/>
    <property type="match status" value="1"/>
</dbReference>
<feature type="signal peptide" evidence="2">
    <location>
        <begin position="1"/>
        <end position="21"/>
    </location>
</feature>
<feature type="chain" id="PRO_0000398333" description="Zinc transporter 9">
    <location>
        <begin position="22"/>
        <end position="362"/>
    </location>
</feature>
<feature type="topological domain" description="Extracellular" evidence="2">
    <location>
        <begin position="22"/>
        <end position="42"/>
    </location>
</feature>
<feature type="transmembrane region" description="Helical" evidence="2">
    <location>
        <begin position="43"/>
        <end position="63"/>
    </location>
</feature>
<feature type="topological domain" description="Cytoplasmic" evidence="2">
    <location>
        <begin position="64"/>
        <end position="74"/>
    </location>
</feature>
<feature type="transmembrane region" description="Helical" evidence="2">
    <location>
        <begin position="75"/>
        <end position="95"/>
    </location>
</feature>
<feature type="topological domain" description="Extracellular" evidence="2">
    <location>
        <begin position="96"/>
        <end position="120"/>
    </location>
</feature>
<feature type="transmembrane region" description="Helical" evidence="2">
    <location>
        <begin position="121"/>
        <end position="141"/>
    </location>
</feature>
<feature type="topological domain" description="Cytoplasmic" evidence="2">
    <location>
        <begin position="142"/>
        <end position="207"/>
    </location>
</feature>
<feature type="transmembrane region" description="Helical" evidence="2">
    <location>
        <begin position="208"/>
        <end position="228"/>
    </location>
</feature>
<feature type="topological domain" description="Extracellular" evidence="2">
    <location>
        <begin position="229"/>
        <end position="239"/>
    </location>
</feature>
<feature type="transmembrane region" description="Helical" evidence="2">
    <location>
        <begin position="240"/>
        <end position="260"/>
    </location>
</feature>
<feature type="topological domain" description="Cytoplasmic" evidence="2">
    <location>
        <begin position="261"/>
        <end position="269"/>
    </location>
</feature>
<feature type="transmembrane region" description="Helical" evidence="2">
    <location>
        <begin position="270"/>
        <end position="290"/>
    </location>
</feature>
<feature type="topological domain" description="Extracellular" evidence="2">
    <location>
        <begin position="291"/>
        <end position="301"/>
    </location>
</feature>
<feature type="transmembrane region" description="Helical" evidence="2">
    <location>
        <begin position="302"/>
        <end position="322"/>
    </location>
</feature>
<feature type="topological domain" description="Cytoplasmic" evidence="2">
    <location>
        <begin position="323"/>
        <end position="341"/>
    </location>
</feature>
<feature type="transmembrane region" description="Helical" evidence="2">
    <location>
        <begin position="342"/>
        <end position="362"/>
    </location>
</feature>
<organism>
    <name type="scientific">Oryza sativa subsp. japonica</name>
    <name type="common">Rice</name>
    <dbReference type="NCBI Taxonomy" id="39947"/>
    <lineage>
        <taxon>Eukaryota</taxon>
        <taxon>Viridiplantae</taxon>
        <taxon>Streptophyta</taxon>
        <taxon>Embryophyta</taxon>
        <taxon>Tracheophyta</taxon>
        <taxon>Spermatophyta</taxon>
        <taxon>Magnoliopsida</taxon>
        <taxon>Liliopsida</taxon>
        <taxon>Poales</taxon>
        <taxon>Poaceae</taxon>
        <taxon>BOP clade</taxon>
        <taxon>Oryzoideae</taxon>
        <taxon>Oryzeae</taxon>
        <taxon>Oryzinae</taxon>
        <taxon>Oryza</taxon>
        <taxon>Oryza sativa</taxon>
    </lineage>
</organism>
<evidence type="ECO:0000250" key="1"/>
<evidence type="ECO:0000255" key="2"/>
<evidence type="ECO:0000305" key="3"/>
<protein>
    <recommendedName>
        <fullName>Zinc transporter 9</fullName>
    </recommendedName>
    <alternativeName>
        <fullName>ZRT/IRT-like protein 9</fullName>
        <shortName>OsZIP9</shortName>
    </alternativeName>
</protein>
<name>ZIP9_ORYSJ</name>
<proteinExistence type="inferred from homology"/>
<comment type="function">
    <text evidence="1">Zinc transporter that may be involved in zinc uptake from the rhizosphere.</text>
</comment>
<comment type="subcellular location">
    <subcellularLocation>
        <location evidence="3">Cell membrane</location>
        <topology evidence="3">Multi-pass membrane protein</topology>
    </subcellularLocation>
</comment>
<comment type="similarity">
    <text evidence="3">Belongs to the ZIP transporter (TC 2.A.5) family.</text>
</comment>
<comment type="sequence caution" evidence="3">
    <conflict type="erroneous gene model prediction">
        <sequence resource="EMBL-CDS" id="BAF17730"/>
    </conflict>
</comment>
<gene>
    <name type="primary">ZIP9</name>
    <name type="ordered locus">Os05g0472400</name>
    <name type="ordered locus">LOC_Os05g39540</name>
</gene>